<organism>
    <name type="scientific">Pisum sativum</name>
    <name type="common">Garden pea</name>
    <name type="synonym">Lathyrus oleraceus</name>
    <dbReference type="NCBI Taxonomy" id="3888"/>
    <lineage>
        <taxon>Eukaryota</taxon>
        <taxon>Viridiplantae</taxon>
        <taxon>Streptophyta</taxon>
        <taxon>Embryophyta</taxon>
        <taxon>Tracheophyta</taxon>
        <taxon>Spermatophyta</taxon>
        <taxon>Magnoliopsida</taxon>
        <taxon>eudicotyledons</taxon>
        <taxon>Gunneridae</taxon>
        <taxon>Pentapetalae</taxon>
        <taxon>rosids</taxon>
        <taxon>fabids</taxon>
        <taxon>Fabales</taxon>
        <taxon>Fabaceae</taxon>
        <taxon>Papilionoideae</taxon>
        <taxon>50 kb inversion clade</taxon>
        <taxon>NPAAA clade</taxon>
        <taxon>Hologalegina</taxon>
        <taxon>IRL clade</taxon>
        <taxon>Fabeae</taxon>
        <taxon>Pisum</taxon>
    </lineage>
</organism>
<evidence type="ECO:0000250" key="1"/>
<evidence type="ECO:0000305" key="2"/>
<feature type="chain" id="PRO_0000090783" description="Pyruvate decarboxylase 2">
    <location>
        <begin position="1" status="less than"/>
        <end position="405"/>
    </location>
</feature>
<feature type="region of interest" description="Thiamine pyrophosphate binding">
    <location>
        <begin position="232"/>
        <end position="314"/>
    </location>
</feature>
<feature type="binding site" evidence="1">
    <location>
        <position position="282"/>
    </location>
    <ligand>
        <name>Mg(2+)</name>
        <dbReference type="ChEBI" id="CHEBI:18420"/>
    </ligand>
</feature>
<feature type="binding site" evidence="1">
    <location>
        <position position="309"/>
    </location>
    <ligand>
        <name>Mg(2+)</name>
        <dbReference type="ChEBI" id="CHEBI:18420"/>
    </ligand>
</feature>
<feature type="binding site" evidence="1">
    <location>
        <position position="311"/>
    </location>
    <ligand>
        <name>Mg(2+)</name>
        <dbReference type="ChEBI" id="CHEBI:18420"/>
    </ligand>
</feature>
<feature type="binding site" evidence="1">
    <location>
        <position position="315"/>
    </location>
    <ligand>
        <name>substrate</name>
    </ligand>
</feature>
<feature type="non-terminal residue">
    <location>
        <position position="1"/>
    </location>
</feature>
<protein>
    <recommendedName>
        <fullName>Pyruvate decarboxylase 2</fullName>
        <shortName>PDC</shortName>
        <ecNumber>4.1.1.1</ecNumber>
    </recommendedName>
</protein>
<accession>P51851</accession>
<reference key="1">
    <citation type="journal article" date="1996" name="Eur. J. Biochem.">
        <title>Pyruvate decarboxylase from Pisum sativum. Properties, nucleotide and amino acid sequences.</title>
        <authorList>
            <person name="Muecke U."/>
            <person name="Wohlfarth T."/>
            <person name="Fiedler U."/>
            <person name="Baeumlein H."/>
            <person name="Ruecknagel K.P."/>
            <person name="Koenig S."/>
        </authorList>
    </citation>
    <scope>NUCLEOTIDE SEQUENCE [MRNA]</scope>
    <source>
        <strain>cv. Miko</strain>
    </source>
</reference>
<sequence length="405" mass="44079">PVYISIGCNLPAIPHPTFSRDPVPFSLAPKLSNQMGLEAAVEAAAEFLNKAVKPVLVGGPKLRVAKASDAFVELADASGYALAVMPSAKGMVPEHHPHFIGTYWGAVSTAFCAEIVESADAYLFAGPIFNDYSSVGYSLLLKKEKAIIVMPDRVVIANGPAFGCVLMNDFLKALAKRLKHNNVAYENYHRIFVPDGTPLKSASKEPLRVNVMFQHIQKMLSSETAVIAETGDSWFNCQKLKLPEGCGYEFQMQYGSIGWSVGATLGYAQAVPEKRVIACIGDGSFQVTAQDVSTMLRCGQKTIIFLINNGGYTIEVEIHDGPYNVIKNWNYTGLVDAIHNGEGKCWTTKVFCEEELVEAIAKATGPKKDSLCFIEVIVHKDDTSKELLEWGSRVSAANSRPPNPQ</sequence>
<gene>
    <name type="primary">PDC2</name>
</gene>
<comment type="catalytic activity">
    <reaction>
        <text>a 2-oxocarboxylate + H(+) = an aldehyde + CO2</text>
        <dbReference type="Rhea" id="RHEA:11628"/>
        <dbReference type="ChEBI" id="CHEBI:15378"/>
        <dbReference type="ChEBI" id="CHEBI:16526"/>
        <dbReference type="ChEBI" id="CHEBI:17478"/>
        <dbReference type="ChEBI" id="CHEBI:35179"/>
        <dbReference type="EC" id="4.1.1.1"/>
    </reaction>
</comment>
<comment type="cofactor">
    <cofactor>
        <name>a metal cation</name>
        <dbReference type="ChEBI" id="CHEBI:25213"/>
    </cofactor>
    <text>Binds 1 metal ion per subunit.</text>
</comment>
<comment type="cofactor">
    <cofactor>
        <name>thiamine diphosphate</name>
        <dbReference type="ChEBI" id="CHEBI:58937"/>
    </cofactor>
    <text>Binds 1 thiamine pyrophosphate per subunit.</text>
</comment>
<comment type="subunit">
    <text evidence="2">Homotetramer.</text>
</comment>
<comment type="similarity">
    <text evidence="2">Belongs to the TPP enzyme family.</text>
</comment>
<name>PDC2_PEA</name>
<keyword id="KW-0210">Decarboxylase</keyword>
<keyword id="KW-0456">Lyase</keyword>
<keyword id="KW-0460">Magnesium</keyword>
<keyword id="KW-0479">Metal-binding</keyword>
<keyword id="KW-0786">Thiamine pyrophosphate</keyword>
<proteinExistence type="evidence at transcript level"/>
<dbReference type="EC" id="4.1.1.1"/>
<dbReference type="EMBL" id="Z66544">
    <property type="protein sequence ID" value="CAA91445.1"/>
    <property type="molecule type" value="mRNA"/>
</dbReference>
<dbReference type="PIR" id="S65471">
    <property type="entry name" value="S65471"/>
</dbReference>
<dbReference type="SMR" id="P51851"/>
<dbReference type="GO" id="GO:0005829">
    <property type="term" value="C:cytosol"/>
    <property type="evidence" value="ECO:0007669"/>
    <property type="project" value="TreeGrafter"/>
</dbReference>
<dbReference type="GO" id="GO:0000287">
    <property type="term" value="F:magnesium ion binding"/>
    <property type="evidence" value="ECO:0007669"/>
    <property type="project" value="InterPro"/>
</dbReference>
<dbReference type="GO" id="GO:0004737">
    <property type="term" value="F:pyruvate decarboxylase activity"/>
    <property type="evidence" value="ECO:0007669"/>
    <property type="project" value="UniProtKB-EC"/>
</dbReference>
<dbReference type="GO" id="GO:0030976">
    <property type="term" value="F:thiamine pyrophosphate binding"/>
    <property type="evidence" value="ECO:0007669"/>
    <property type="project" value="InterPro"/>
</dbReference>
<dbReference type="GO" id="GO:0000949">
    <property type="term" value="P:aromatic amino acid family catabolic process to alcohol via Ehrlich pathway"/>
    <property type="evidence" value="ECO:0007669"/>
    <property type="project" value="TreeGrafter"/>
</dbReference>
<dbReference type="CDD" id="cd02005">
    <property type="entry name" value="TPP_PDC_IPDC"/>
    <property type="match status" value="1"/>
</dbReference>
<dbReference type="FunFam" id="3.40.50.1220:FF:000009">
    <property type="entry name" value="Pyruvate decarboxylase 1"/>
    <property type="match status" value="1"/>
</dbReference>
<dbReference type="FunFam" id="3.40.50.970:FF:000021">
    <property type="entry name" value="Pyruvate decarboxylase 1"/>
    <property type="match status" value="1"/>
</dbReference>
<dbReference type="Gene3D" id="3.40.50.970">
    <property type="match status" value="1"/>
</dbReference>
<dbReference type="Gene3D" id="3.40.50.1220">
    <property type="entry name" value="TPP-binding domain"/>
    <property type="match status" value="1"/>
</dbReference>
<dbReference type="InterPro" id="IPR029035">
    <property type="entry name" value="DHS-like_NAD/FAD-binding_dom"/>
</dbReference>
<dbReference type="InterPro" id="IPR012110">
    <property type="entry name" value="PDC/IPDC-like"/>
</dbReference>
<dbReference type="InterPro" id="IPR029061">
    <property type="entry name" value="THDP-binding"/>
</dbReference>
<dbReference type="InterPro" id="IPR012000">
    <property type="entry name" value="Thiamin_PyroP_enz_cen_dom"/>
</dbReference>
<dbReference type="InterPro" id="IPR011766">
    <property type="entry name" value="TPP_enzyme_TPP-bd"/>
</dbReference>
<dbReference type="InterPro" id="IPR047214">
    <property type="entry name" value="TPP_PDC_IPDC"/>
</dbReference>
<dbReference type="PANTHER" id="PTHR43452">
    <property type="entry name" value="PYRUVATE DECARBOXYLASE"/>
    <property type="match status" value="1"/>
</dbReference>
<dbReference type="PANTHER" id="PTHR43452:SF6">
    <property type="entry name" value="PYRUVATE DECARBOXYLASE 2"/>
    <property type="match status" value="1"/>
</dbReference>
<dbReference type="Pfam" id="PF02775">
    <property type="entry name" value="TPP_enzyme_C"/>
    <property type="match status" value="1"/>
</dbReference>
<dbReference type="Pfam" id="PF00205">
    <property type="entry name" value="TPP_enzyme_M"/>
    <property type="match status" value="1"/>
</dbReference>
<dbReference type="SUPFAM" id="SSF52467">
    <property type="entry name" value="DHS-like NAD/FAD-binding domain"/>
    <property type="match status" value="1"/>
</dbReference>
<dbReference type="SUPFAM" id="SSF52518">
    <property type="entry name" value="Thiamin diphosphate-binding fold (THDP-binding)"/>
    <property type="match status" value="1"/>
</dbReference>